<organism>
    <name type="scientific">Bacillus subtilis (strain 168)</name>
    <dbReference type="NCBI Taxonomy" id="224308"/>
    <lineage>
        <taxon>Bacteria</taxon>
        <taxon>Bacillati</taxon>
        <taxon>Bacillota</taxon>
        <taxon>Bacilli</taxon>
        <taxon>Bacillales</taxon>
        <taxon>Bacillaceae</taxon>
        <taxon>Bacillus</taxon>
    </lineage>
</organism>
<reference key="1">
    <citation type="journal article" date="1997" name="Nature">
        <title>The complete genome sequence of the Gram-positive bacterium Bacillus subtilis.</title>
        <authorList>
            <person name="Kunst F."/>
            <person name="Ogasawara N."/>
            <person name="Moszer I."/>
            <person name="Albertini A.M."/>
            <person name="Alloni G."/>
            <person name="Azevedo V."/>
            <person name="Bertero M.G."/>
            <person name="Bessieres P."/>
            <person name="Bolotin A."/>
            <person name="Borchert S."/>
            <person name="Borriss R."/>
            <person name="Boursier L."/>
            <person name="Brans A."/>
            <person name="Braun M."/>
            <person name="Brignell S.C."/>
            <person name="Bron S."/>
            <person name="Brouillet S."/>
            <person name="Bruschi C.V."/>
            <person name="Caldwell B."/>
            <person name="Capuano V."/>
            <person name="Carter N.M."/>
            <person name="Choi S.-K."/>
            <person name="Codani J.-J."/>
            <person name="Connerton I.F."/>
            <person name="Cummings N.J."/>
            <person name="Daniel R.A."/>
            <person name="Denizot F."/>
            <person name="Devine K.M."/>
            <person name="Duesterhoeft A."/>
            <person name="Ehrlich S.D."/>
            <person name="Emmerson P.T."/>
            <person name="Entian K.-D."/>
            <person name="Errington J."/>
            <person name="Fabret C."/>
            <person name="Ferrari E."/>
            <person name="Foulger D."/>
            <person name="Fritz C."/>
            <person name="Fujita M."/>
            <person name="Fujita Y."/>
            <person name="Fuma S."/>
            <person name="Galizzi A."/>
            <person name="Galleron N."/>
            <person name="Ghim S.-Y."/>
            <person name="Glaser P."/>
            <person name="Goffeau A."/>
            <person name="Golightly E.J."/>
            <person name="Grandi G."/>
            <person name="Guiseppi G."/>
            <person name="Guy B.J."/>
            <person name="Haga K."/>
            <person name="Haiech J."/>
            <person name="Harwood C.R."/>
            <person name="Henaut A."/>
            <person name="Hilbert H."/>
            <person name="Holsappel S."/>
            <person name="Hosono S."/>
            <person name="Hullo M.-F."/>
            <person name="Itaya M."/>
            <person name="Jones L.-M."/>
            <person name="Joris B."/>
            <person name="Karamata D."/>
            <person name="Kasahara Y."/>
            <person name="Klaerr-Blanchard M."/>
            <person name="Klein C."/>
            <person name="Kobayashi Y."/>
            <person name="Koetter P."/>
            <person name="Koningstein G."/>
            <person name="Krogh S."/>
            <person name="Kumano M."/>
            <person name="Kurita K."/>
            <person name="Lapidus A."/>
            <person name="Lardinois S."/>
            <person name="Lauber J."/>
            <person name="Lazarevic V."/>
            <person name="Lee S.-M."/>
            <person name="Levine A."/>
            <person name="Liu H."/>
            <person name="Masuda S."/>
            <person name="Mauel C."/>
            <person name="Medigue C."/>
            <person name="Medina N."/>
            <person name="Mellado R.P."/>
            <person name="Mizuno M."/>
            <person name="Moestl D."/>
            <person name="Nakai S."/>
            <person name="Noback M."/>
            <person name="Noone D."/>
            <person name="O'Reilly M."/>
            <person name="Ogawa K."/>
            <person name="Ogiwara A."/>
            <person name="Oudega B."/>
            <person name="Park S.-H."/>
            <person name="Parro V."/>
            <person name="Pohl T.M."/>
            <person name="Portetelle D."/>
            <person name="Porwollik S."/>
            <person name="Prescott A.M."/>
            <person name="Presecan E."/>
            <person name="Pujic P."/>
            <person name="Purnelle B."/>
            <person name="Rapoport G."/>
            <person name="Rey M."/>
            <person name="Reynolds S."/>
            <person name="Rieger M."/>
            <person name="Rivolta C."/>
            <person name="Rocha E."/>
            <person name="Roche B."/>
            <person name="Rose M."/>
            <person name="Sadaie Y."/>
            <person name="Sato T."/>
            <person name="Scanlan E."/>
            <person name="Schleich S."/>
            <person name="Schroeter R."/>
            <person name="Scoffone F."/>
            <person name="Sekiguchi J."/>
            <person name="Sekowska A."/>
            <person name="Seror S.J."/>
            <person name="Serror P."/>
            <person name="Shin B.-S."/>
            <person name="Soldo B."/>
            <person name="Sorokin A."/>
            <person name="Tacconi E."/>
            <person name="Takagi T."/>
            <person name="Takahashi H."/>
            <person name="Takemaru K."/>
            <person name="Takeuchi M."/>
            <person name="Tamakoshi A."/>
            <person name="Tanaka T."/>
            <person name="Terpstra P."/>
            <person name="Tognoni A."/>
            <person name="Tosato V."/>
            <person name="Uchiyama S."/>
            <person name="Vandenbol M."/>
            <person name="Vannier F."/>
            <person name="Vassarotti A."/>
            <person name="Viari A."/>
            <person name="Wambutt R."/>
            <person name="Wedler E."/>
            <person name="Wedler H."/>
            <person name="Weitzenegger T."/>
            <person name="Winters P."/>
            <person name="Wipat A."/>
            <person name="Yamamoto H."/>
            <person name="Yamane K."/>
            <person name="Yasumoto K."/>
            <person name="Yata K."/>
            <person name="Yoshida K."/>
            <person name="Yoshikawa H.-F."/>
            <person name="Zumstein E."/>
            <person name="Yoshikawa H."/>
            <person name="Danchin A."/>
        </authorList>
    </citation>
    <scope>NUCLEOTIDE SEQUENCE [LARGE SCALE GENOMIC DNA]</scope>
    <source>
        <strain>168</strain>
    </source>
</reference>
<reference key="2">
    <citation type="journal article" date="1999" name="Genome Res.">
        <title>Detecting and analyzing DNA sequencing errors: toward a higher quality of the Bacillus subtilis genome sequence.</title>
        <authorList>
            <person name="Medigue C."/>
            <person name="Rose M."/>
            <person name="Viari A."/>
            <person name="Danchin A."/>
        </authorList>
    </citation>
    <scope>SEQUENCE REVISION</scope>
</reference>
<reference key="3">
    <citation type="journal article" date="2009" name="Microbiology">
        <title>From a consortium sequence to a unified sequence: the Bacillus subtilis 168 reference genome a decade later.</title>
        <authorList>
            <person name="Barbe V."/>
            <person name="Cruveiller S."/>
            <person name="Kunst F."/>
            <person name="Lenoble P."/>
            <person name="Meurice G."/>
            <person name="Sekowska A."/>
            <person name="Vallenet D."/>
            <person name="Wang T."/>
            <person name="Moszer I."/>
            <person name="Medigue C."/>
            <person name="Danchin A."/>
        </authorList>
    </citation>
    <scope>SEQUENCE REVISION TO 17-18</scope>
</reference>
<feature type="chain" id="PRO_0000121609" description="tRNA-specific 2-thiouridylase MnmA">
    <location>
        <begin position="1"/>
        <end position="371"/>
    </location>
</feature>
<feature type="region of interest" description="Interaction with target base in tRNA" evidence="1">
    <location>
        <begin position="99"/>
        <end position="101"/>
    </location>
</feature>
<feature type="region of interest" description="Interaction with tRNA" evidence="1">
    <location>
        <begin position="150"/>
        <end position="152"/>
    </location>
</feature>
<feature type="region of interest" description="Interaction with tRNA" evidence="1">
    <location>
        <begin position="309"/>
        <end position="310"/>
    </location>
</feature>
<feature type="active site" description="Nucleophile" evidence="1">
    <location>
        <position position="104"/>
    </location>
</feature>
<feature type="active site" description="Cysteine persulfide intermediate" evidence="1">
    <location>
        <position position="200"/>
    </location>
</feature>
<feature type="binding site" evidence="1">
    <location>
        <begin position="13"/>
        <end position="20"/>
    </location>
    <ligand>
        <name>ATP</name>
        <dbReference type="ChEBI" id="CHEBI:30616"/>
    </ligand>
</feature>
<feature type="binding site" evidence="1">
    <location>
        <position position="39"/>
    </location>
    <ligand>
        <name>ATP</name>
        <dbReference type="ChEBI" id="CHEBI:30616"/>
    </ligand>
</feature>
<feature type="binding site" evidence="1">
    <location>
        <position position="128"/>
    </location>
    <ligand>
        <name>ATP</name>
        <dbReference type="ChEBI" id="CHEBI:30616"/>
    </ligand>
</feature>
<feature type="site" description="Interaction with tRNA" evidence="1">
    <location>
        <position position="129"/>
    </location>
</feature>
<feature type="site" description="Interaction with tRNA" evidence="1">
    <location>
        <position position="342"/>
    </location>
</feature>
<feature type="disulfide bond" description="Alternate" evidence="1">
    <location>
        <begin position="104"/>
        <end position="200"/>
    </location>
</feature>
<evidence type="ECO:0000255" key="1">
    <source>
        <dbReference type="HAMAP-Rule" id="MF_00144"/>
    </source>
</evidence>
<comment type="function">
    <text evidence="1">Catalyzes the 2-thiolation of uridine at the wobble position (U34) of tRNA, leading to the formation of s(2)U34.</text>
</comment>
<comment type="catalytic activity">
    <reaction evidence="1">
        <text>S-sulfanyl-L-cysteinyl-[protein] + uridine(34) in tRNA + AH2 + ATP = 2-thiouridine(34) in tRNA + L-cysteinyl-[protein] + A + AMP + diphosphate + H(+)</text>
        <dbReference type="Rhea" id="RHEA:47032"/>
        <dbReference type="Rhea" id="RHEA-COMP:10131"/>
        <dbReference type="Rhea" id="RHEA-COMP:11726"/>
        <dbReference type="Rhea" id="RHEA-COMP:11727"/>
        <dbReference type="Rhea" id="RHEA-COMP:11728"/>
        <dbReference type="ChEBI" id="CHEBI:13193"/>
        <dbReference type="ChEBI" id="CHEBI:15378"/>
        <dbReference type="ChEBI" id="CHEBI:17499"/>
        <dbReference type="ChEBI" id="CHEBI:29950"/>
        <dbReference type="ChEBI" id="CHEBI:30616"/>
        <dbReference type="ChEBI" id="CHEBI:33019"/>
        <dbReference type="ChEBI" id="CHEBI:61963"/>
        <dbReference type="ChEBI" id="CHEBI:65315"/>
        <dbReference type="ChEBI" id="CHEBI:87170"/>
        <dbReference type="ChEBI" id="CHEBI:456215"/>
        <dbReference type="EC" id="2.8.1.13"/>
    </reaction>
</comment>
<comment type="subcellular location">
    <subcellularLocation>
        <location evidence="1">Cytoplasm</location>
    </subcellularLocation>
</comment>
<comment type="similarity">
    <text evidence="1">Belongs to the MnmA/TRMU family.</text>
</comment>
<proteinExistence type="inferred from homology"/>
<protein>
    <recommendedName>
        <fullName evidence="1">tRNA-specific 2-thiouridylase MnmA</fullName>
        <ecNumber evidence="1">2.8.1.13</ecNumber>
    </recommendedName>
</protein>
<sequence length="371" mass="41918">MEKRPEDTRVVVGMSGGVDSSVAALLLKEQGYDVIGIFMKNWDDTDENGFCTATEDYEDVIRVCNQIGIPYYAVNFEKQYYEKVFQYFLDEYKAGRTPNPDVLCNKEIKFKAFLEHALSLGADYLATGHYARVDRSGGKVRMLRGIDENKDQTYFLNQLTEDTLSKVMFPIGELQKSRVREIAKEAELATATKKDSTGICFIGERNFKTFLSQYLPAQPGDMMTMDGEVKGRHDGLMYYTIGQRHGLGIGGSGEPWFAVGKDLEKNILYVDQGFHNPLLYSDKITATNISWVRSDIMKGEEISCTAKFRYRQEDHKVTVRMTGEGEAEVIFDEQVRAVTPGQAVVFYDGEECLGGGTIDDVYKDGTKLWYV</sequence>
<gene>
    <name evidence="1" type="primary">mnmA</name>
    <name type="synonym">trmU</name>
    <name type="synonym">yrrA</name>
    <name type="ordered locus">BSU27500</name>
</gene>
<dbReference type="EC" id="2.8.1.13" evidence="1"/>
<dbReference type="EMBL" id="AL009126">
    <property type="protein sequence ID" value="CAB14691.3"/>
    <property type="molecule type" value="Genomic_DNA"/>
</dbReference>
<dbReference type="PIR" id="G69978">
    <property type="entry name" value="G69978"/>
</dbReference>
<dbReference type="RefSeq" id="NP_390627.3">
    <property type="nucleotide sequence ID" value="NC_000964.3"/>
</dbReference>
<dbReference type="RefSeq" id="WP_004398509.1">
    <property type="nucleotide sequence ID" value="NZ_OZ025638.1"/>
</dbReference>
<dbReference type="SMR" id="O35020"/>
<dbReference type="FunCoup" id="O35020">
    <property type="interactions" value="643"/>
</dbReference>
<dbReference type="STRING" id="224308.BSU27500"/>
<dbReference type="jPOST" id="O35020"/>
<dbReference type="PaxDb" id="224308-BSU27500"/>
<dbReference type="EnsemblBacteria" id="CAB14691">
    <property type="protein sequence ID" value="CAB14691"/>
    <property type="gene ID" value="BSU_27500"/>
</dbReference>
<dbReference type="GeneID" id="86872741"/>
<dbReference type="GeneID" id="938049"/>
<dbReference type="KEGG" id="bsu:BSU27500"/>
<dbReference type="PATRIC" id="fig|224308.179.peg.2988"/>
<dbReference type="eggNOG" id="COG0482">
    <property type="taxonomic scope" value="Bacteria"/>
</dbReference>
<dbReference type="InParanoid" id="O35020"/>
<dbReference type="OrthoDB" id="9800696at2"/>
<dbReference type="PhylomeDB" id="O35020"/>
<dbReference type="BioCyc" id="BSUB:BSU27500-MONOMER"/>
<dbReference type="BRENDA" id="2.8.1.13">
    <property type="organism ID" value="658"/>
</dbReference>
<dbReference type="Proteomes" id="UP000001570">
    <property type="component" value="Chromosome"/>
</dbReference>
<dbReference type="GO" id="GO:0005737">
    <property type="term" value="C:cytoplasm"/>
    <property type="evidence" value="ECO:0007669"/>
    <property type="project" value="UniProtKB-SubCell"/>
</dbReference>
<dbReference type="GO" id="GO:0005524">
    <property type="term" value="F:ATP binding"/>
    <property type="evidence" value="ECO:0007669"/>
    <property type="project" value="UniProtKB-KW"/>
</dbReference>
<dbReference type="GO" id="GO:0000049">
    <property type="term" value="F:tRNA binding"/>
    <property type="evidence" value="ECO:0007669"/>
    <property type="project" value="UniProtKB-KW"/>
</dbReference>
<dbReference type="GO" id="GO:0103016">
    <property type="term" value="F:tRNA-uridine 2-sulfurtransferase activity"/>
    <property type="evidence" value="ECO:0007669"/>
    <property type="project" value="UniProtKB-EC"/>
</dbReference>
<dbReference type="GO" id="GO:0002143">
    <property type="term" value="P:tRNA wobble position uridine thiolation"/>
    <property type="evidence" value="ECO:0000318"/>
    <property type="project" value="GO_Central"/>
</dbReference>
<dbReference type="CDD" id="cd01998">
    <property type="entry name" value="MnmA_TRMU-like"/>
    <property type="match status" value="1"/>
</dbReference>
<dbReference type="FunFam" id="2.30.30.280:FF:000001">
    <property type="entry name" value="tRNA-specific 2-thiouridylase MnmA"/>
    <property type="match status" value="1"/>
</dbReference>
<dbReference type="FunFam" id="2.40.30.10:FF:000023">
    <property type="entry name" value="tRNA-specific 2-thiouridylase MnmA"/>
    <property type="match status" value="1"/>
</dbReference>
<dbReference type="FunFam" id="3.40.50.620:FF:000004">
    <property type="entry name" value="tRNA-specific 2-thiouridylase MnmA"/>
    <property type="match status" value="1"/>
</dbReference>
<dbReference type="Gene3D" id="2.30.30.280">
    <property type="entry name" value="Adenine nucleotide alpha hydrolases-like domains"/>
    <property type="match status" value="1"/>
</dbReference>
<dbReference type="Gene3D" id="3.40.50.620">
    <property type="entry name" value="HUPs"/>
    <property type="match status" value="1"/>
</dbReference>
<dbReference type="Gene3D" id="2.40.30.10">
    <property type="entry name" value="Translation factors"/>
    <property type="match status" value="1"/>
</dbReference>
<dbReference type="HAMAP" id="MF_00144">
    <property type="entry name" value="tRNA_thiouridyl_MnmA"/>
    <property type="match status" value="1"/>
</dbReference>
<dbReference type="InterPro" id="IPR004506">
    <property type="entry name" value="MnmA-like"/>
</dbReference>
<dbReference type="InterPro" id="IPR046885">
    <property type="entry name" value="MnmA-like_C"/>
</dbReference>
<dbReference type="InterPro" id="IPR046884">
    <property type="entry name" value="MnmA-like_central"/>
</dbReference>
<dbReference type="InterPro" id="IPR023382">
    <property type="entry name" value="MnmA-like_central_sf"/>
</dbReference>
<dbReference type="InterPro" id="IPR014729">
    <property type="entry name" value="Rossmann-like_a/b/a_fold"/>
</dbReference>
<dbReference type="NCBIfam" id="NF001138">
    <property type="entry name" value="PRK00143.1"/>
    <property type="match status" value="1"/>
</dbReference>
<dbReference type="NCBIfam" id="TIGR00420">
    <property type="entry name" value="trmU"/>
    <property type="match status" value="1"/>
</dbReference>
<dbReference type="PANTHER" id="PTHR11933:SF5">
    <property type="entry name" value="MITOCHONDRIAL TRNA-SPECIFIC 2-THIOURIDYLASE 1"/>
    <property type="match status" value="1"/>
</dbReference>
<dbReference type="PANTHER" id="PTHR11933">
    <property type="entry name" value="TRNA 5-METHYLAMINOMETHYL-2-THIOURIDYLATE -METHYLTRANSFERASE"/>
    <property type="match status" value="1"/>
</dbReference>
<dbReference type="Pfam" id="PF03054">
    <property type="entry name" value="tRNA_Me_trans"/>
    <property type="match status" value="1"/>
</dbReference>
<dbReference type="Pfam" id="PF20258">
    <property type="entry name" value="tRNA_Me_trans_C"/>
    <property type="match status" value="1"/>
</dbReference>
<dbReference type="Pfam" id="PF20259">
    <property type="entry name" value="tRNA_Me_trans_M"/>
    <property type="match status" value="1"/>
</dbReference>
<dbReference type="SUPFAM" id="SSF52402">
    <property type="entry name" value="Adenine nucleotide alpha hydrolases-like"/>
    <property type="match status" value="1"/>
</dbReference>
<name>MNMA_BACSU</name>
<keyword id="KW-0067">ATP-binding</keyword>
<keyword id="KW-0963">Cytoplasm</keyword>
<keyword id="KW-1015">Disulfide bond</keyword>
<keyword id="KW-0547">Nucleotide-binding</keyword>
<keyword id="KW-1185">Reference proteome</keyword>
<keyword id="KW-0694">RNA-binding</keyword>
<keyword id="KW-0808">Transferase</keyword>
<keyword id="KW-0819">tRNA processing</keyword>
<keyword id="KW-0820">tRNA-binding</keyword>
<accession>O35020</accession>